<name>PVK22_NEORO</name>
<protein>
    <recommendedName>
        <fullName>Periviscerokinin-2.2</fullName>
    </recommendedName>
    <alternativeName>
        <fullName>Lem-PVK-2-like peptide</fullName>
    </alternativeName>
    <alternativeName>
        <fullName>Periviscerokinin-2</fullName>
        <shortName>NeoRh-PVK-2</shortName>
    </alternativeName>
</protein>
<keyword id="KW-0027">Amidation</keyword>
<keyword id="KW-0903">Direct protein sequencing</keyword>
<keyword id="KW-0527">Neuropeptide</keyword>
<keyword id="KW-0964">Secreted</keyword>
<reference evidence="4" key="1">
    <citation type="journal article" date="2005" name="Peptides">
        <title>Peptidomics of neurohemal organs from species of the cockroach family Blattidae: how do neuropeptides of closely related species differ?</title>
        <authorList>
            <person name="Predel R."/>
            <person name="Gaede G."/>
        </authorList>
    </citation>
    <scope>PROTEIN SEQUENCE</scope>
    <scope>MASS SPECTROMETRY</scope>
    <scope>AMIDATION AT VAL-11</scope>
    <source>
        <tissue evidence="2">Abdominal perisympathetic organs</tissue>
    </source>
</reference>
<reference key="2">
    <citation type="journal article" date="2009" name="BMC Evol. Biol.">
        <title>A proteomic approach for studying insect phylogeny: CAPA peptides of ancient insect taxa (Dictyoptera, Blattoptera) as a test case.</title>
        <authorList>
            <person name="Roth S."/>
            <person name="Fromm B."/>
            <person name="Gaede G."/>
            <person name="Predel R."/>
        </authorList>
    </citation>
    <scope>PROTEIN SEQUENCE</scope>
    <scope>AMIDATION AT VAL-11</scope>
    <source>
        <tissue>Abdominal perisympathetic organs</tissue>
    </source>
</reference>
<proteinExistence type="evidence at protein level"/>
<feature type="peptide" id="PRO_0000044267" description="Periviscerokinin-2.2">
    <location>
        <begin position="1"/>
        <end position="11"/>
    </location>
</feature>
<feature type="modified residue" description="Valine amide" evidence="2 3">
    <location>
        <position position="11"/>
    </location>
</feature>
<sequence>GSSGLISMPRV</sequence>
<comment type="function">
    <text evidence="4">Mediates visceral muscle contractile activity (myotropic activity).</text>
</comment>
<comment type="subcellular location">
    <subcellularLocation>
        <location evidence="4">Secreted</location>
    </subcellularLocation>
</comment>
<comment type="mass spectrometry"/>
<comment type="similarity">
    <text evidence="1">Belongs to the periviscerokinin family.</text>
</comment>
<evidence type="ECO:0000255" key="1"/>
<evidence type="ECO:0000269" key="2">
    <source>
    </source>
</evidence>
<evidence type="ECO:0000269" key="3">
    <source>
    </source>
</evidence>
<evidence type="ECO:0000305" key="4"/>
<dbReference type="GO" id="GO:0005576">
    <property type="term" value="C:extracellular region"/>
    <property type="evidence" value="ECO:0007669"/>
    <property type="project" value="UniProtKB-SubCell"/>
</dbReference>
<dbReference type="GO" id="GO:0007218">
    <property type="term" value="P:neuropeptide signaling pathway"/>
    <property type="evidence" value="ECO:0007669"/>
    <property type="project" value="UniProtKB-KW"/>
</dbReference>
<dbReference type="InterPro" id="IPR013231">
    <property type="entry name" value="Periviscerokinin"/>
</dbReference>
<dbReference type="Pfam" id="PF08259">
    <property type="entry name" value="Periviscerokin"/>
    <property type="match status" value="1"/>
</dbReference>
<organism>
    <name type="scientific">Neostylopyga rhombifolia</name>
    <name type="common">Harlequin cockroach</name>
    <dbReference type="NCBI Taxonomy" id="304879"/>
    <lineage>
        <taxon>Eukaryota</taxon>
        <taxon>Metazoa</taxon>
        <taxon>Ecdysozoa</taxon>
        <taxon>Arthropoda</taxon>
        <taxon>Hexapoda</taxon>
        <taxon>Insecta</taxon>
        <taxon>Pterygota</taxon>
        <taxon>Neoptera</taxon>
        <taxon>Polyneoptera</taxon>
        <taxon>Dictyoptera</taxon>
        <taxon>Blattodea</taxon>
        <taxon>Blattoidea</taxon>
        <taxon>Blattidae</taxon>
        <taxon>Blattinae</taxon>
        <taxon>Neostylopyga</taxon>
    </lineage>
</organism>
<accession>P84428</accession>